<protein>
    <recommendedName>
        <fullName>Uncharacterized protein Rv1734c</fullName>
    </recommendedName>
</protein>
<keyword id="KW-1185">Reference proteome</keyword>
<dbReference type="EMBL" id="AL123456">
    <property type="protein sequence ID" value="CCP44500.1"/>
    <property type="molecule type" value="Genomic_DNA"/>
</dbReference>
<dbReference type="PIR" id="A70688">
    <property type="entry name" value="A70688"/>
</dbReference>
<dbReference type="RefSeq" id="NP_216250.1">
    <property type="nucleotide sequence ID" value="NC_000962.3"/>
</dbReference>
<dbReference type="RefSeq" id="WP_003408509.1">
    <property type="nucleotide sequence ID" value="NZ_NVQJ01000010.1"/>
</dbReference>
<dbReference type="SMR" id="P9WLS7"/>
<dbReference type="STRING" id="83332.Rv1734c"/>
<dbReference type="PaxDb" id="83332-Rv1734c"/>
<dbReference type="DNASU" id="885212"/>
<dbReference type="GeneID" id="885212"/>
<dbReference type="KEGG" id="mtu:Rv1734c"/>
<dbReference type="KEGG" id="mtv:RVBD_1734c"/>
<dbReference type="TubercuList" id="Rv1734c"/>
<dbReference type="eggNOG" id="COG0508">
    <property type="taxonomic scope" value="Bacteria"/>
</dbReference>
<dbReference type="InParanoid" id="P9WLS7"/>
<dbReference type="OrthoDB" id="9805770at2"/>
<dbReference type="Proteomes" id="UP000001584">
    <property type="component" value="Chromosome"/>
</dbReference>
<dbReference type="GO" id="GO:0016746">
    <property type="term" value="F:acyltransferase activity"/>
    <property type="evidence" value="ECO:0007669"/>
    <property type="project" value="InterPro"/>
</dbReference>
<dbReference type="Gene3D" id="3.30.559.10">
    <property type="entry name" value="Chloramphenicol acetyltransferase-like domain"/>
    <property type="match status" value="1"/>
</dbReference>
<dbReference type="InterPro" id="IPR001078">
    <property type="entry name" value="2-oxoacid_DH_actylTfrase"/>
</dbReference>
<dbReference type="InterPro" id="IPR023213">
    <property type="entry name" value="CAT-like_dom_sf"/>
</dbReference>
<dbReference type="Pfam" id="PF00198">
    <property type="entry name" value="2-oxoacid_dh"/>
    <property type="match status" value="1"/>
</dbReference>
<dbReference type="SUPFAM" id="SSF52777">
    <property type="entry name" value="CoA-dependent acyltransferases"/>
    <property type="match status" value="1"/>
</dbReference>
<proteinExistence type="evidence at transcript level"/>
<evidence type="ECO:0000269" key="1">
    <source>
    </source>
</evidence>
<evidence type="ECO:0000269" key="2">
    <source>
    </source>
</evidence>
<evidence type="ECO:0000269" key="3">
    <source>
    </source>
</evidence>
<evidence type="ECO:0000305" key="4"/>
<feature type="chain" id="PRO_0000392907" description="Uncharacterized protein Rv1734c">
    <location>
        <begin position="1"/>
        <end position="80"/>
    </location>
</feature>
<organism>
    <name type="scientific">Mycobacterium tuberculosis (strain ATCC 25618 / H37Rv)</name>
    <dbReference type="NCBI Taxonomy" id="83332"/>
    <lineage>
        <taxon>Bacteria</taxon>
        <taxon>Bacillati</taxon>
        <taxon>Actinomycetota</taxon>
        <taxon>Actinomycetes</taxon>
        <taxon>Mycobacteriales</taxon>
        <taxon>Mycobacteriaceae</taxon>
        <taxon>Mycobacterium</taxon>
        <taxon>Mycobacterium tuberculosis complex</taxon>
    </lineage>
</organism>
<sequence>MTNVGDQGVDAVFGVIYPPQVALVSFGKPAQRVCAVDGAIHVMTTVLATLPADHGCSDDHRGALFFLSINELTRCAAVTG</sequence>
<accession>P9WLS7</accession>
<accession>L0T942</accession>
<accession>P71992</accession>
<gene>
    <name type="ordered locus">Rv1734c</name>
</gene>
<name>Y1734_MYCTU</name>
<comment type="induction">
    <text evidence="1 2 3">A member of the dormancy regulon. Induced in response to reduced oxygen tension (hypoxia), low levels of nitric oxide (NO) and carbon monoxide (CO). It is hoped that this regulon will give insight into the latent, or dormant phase of infection.</text>
</comment>
<comment type="similarity">
    <text evidence="4">Belongs to the 2-oxoacid dehydrogenase family.</text>
</comment>
<reference key="1">
    <citation type="journal article" date="1998" name="Nature">
        <title>Deciphering the biology of Mycobacterium tuberculosis from the complete genome sequence.</title>
        <authorList>
            <person name="Cole S.T."/>
            <person name="Brosch R."/>
            <person name="Parkhill J."/>
            <person name="Garnier T."/>
            <person name="Churcher C.M."/>
            <person name="Harris D.E."/>
            <person name="Gordon S.V."/>
            <person name="Eiglmeier K."/>
            <person name="Gas S."/>
            <person name="Barry C.E. III"/>
            <person name="Tekaia F."/>
            <person name="Badcock K."/>
            <person name="Basham D."/>
            <person name="Brown D."/>
            <person name="Chillingworth T."/>
            <person name="Connor R."/>
            <person name="Davies R.M."/>
            <person name="Devlin K."/>
            <person name="Feltwell T."/>
            <person name="Gentles S."/>
            <person name="Hamlin N."/>
            <person name="Holroyd S."/>
            <person name="Hornsby T."/>
            <person name="Jagels K."/>
            <person name="Krogh A."/>
            <person name="McLean J."/>
            <person name="Moule S."/>
            <person name="Murphy L.D."/>
            <person name="Oliver S."/>
            <person name="Osborne J."/>
            <person name="Quail M.A."/>
            <person name="Rajandream M.A."/>
            <person name="Rogers J."/>
            <person name="Rutter S."/>
            <person name="Seeger K."/>
            <person name="Skelton S."/>
            <person name="Squares S."/>
            <person name="Squares R."/>
            <person name="Sulston J.E."/>
            <person name="Taylor K."/>
            <person name="Whitehead S."/>
            <person name="Barrell B.G."/>
        </authorList>
    </citation>
    <scope>NUCLEOTIDE SEQUENCE [LARGE SCALE GENOMIC DNA]</scope>
    <source>
        <strain>ATCC 25618 / H37Rv</strain>
    </source>
</reference>
<reference key="2">
    <citation type="journal article" date="2001" name="Proc. Natl. Acad. Sci. U.S.A.">
        <title>Regulation of the Mycobacterium tuberculosis hypoxic response gene encoding alpha -crystallin.</title>
        <authorList>
            <person name="Sherman D.R."/>
            <person name="Voskuil M."/>
            <person name="Schnappinger D."/>
            <person name="Liao R."/>
            <person name="Harrell M.I."/>
            <person name="Schoolnik G.K."/>
        </authorList>
    </citation>
    <scope>INDUCTION BY HYPOXIA</scope>
    <source>
        <strain>ATCC 25618 / H37Rv</strain>
    </source>
</reference>
<reference key="3">
    <citation type="journal article" date="2003" name="J. Exp. Med.">
        <title>Inhibition of respiration by nitric oxide induces a Mycobacterium tuberculosis dormancy program.</title>
        <authorList>
            <person name="Voskuil M.I."/>
            <person name="Schnappinger D."/>
            <person name="Visconti K.C."/>
            <person name="Harrell M.I."/>
            <person name="Dolganov G.M."/>
            <person name="Sherman D.R."/>
            <person name="Schoolnik G.K."/>
        </authorList>
    </citation>
    <scope>INDUCTION BY NITRIC OXIDE (NO) AND BY HYPOXIA</scope>
    <scope>DORMANCY REGULON</scope>
    <source>
        <strain>ATCC 25618 / H37Rv</strain>
    </source>
</reference>
<reference key="4">
    <citation type="journal article" date="2008" name="J. Biol. Chem.">
        <title>Heme oxygenase-1-derived carbon monoxide induces the Mycobacterium tuberculosis dormancy regulon.</title>
        <authorList>
            <person name="Kumar A."/>
            <person name="Deshane J.S."/>
            <person name="Crossman D.K."/>
            <person name="Bolisetty S."/>
            <person name="Yan B.S."/>
            <person name="Kramnik I."/>
            <person name="Agarwal A."/>
            <person name="Steyn A.J."/>
        </authorList>
    </citation>
    <scope>INDUCTION BY CARBON MONOXIDE (CO)</scope>
    <scope>DORMANCY REGULON</scope>
    <source>
        <strain>ATCC 25618 / H37Rv</strain>
    </source>
</reference>